<sequence length="531" mass="58880">MPKFVVVTGGVMSGLGKGVVAASVGRILRARGLSVTAVKIDPYLNVDAGTMNPYQHGEVFVTFDGGETDLDLGHYERFLDVELPHRNNITSGQIYKSVIEKERRGDYLGQTVQLIPHVTDEIKRRLVEAAGGFDVAIVEIGGTVGDYEQLPFLEAVRQLRLELGGDVLFVHVAWVPILKTTGEFKTKPLQHSVAELRRYGIQPDAVVVRSERPIDANAVKKISLFAHVPQHAIFNSYDVDTIYKVPLLLERQGMGDFLVERLRLRGRSPDYGEWESFVARLSAPSRKIAVGMCGKYVELPDAYLSIVEALRHAGAALDVRPELVWINSVEVEKNPDLLPKAGVDAMVVLPGFGKRGTEGMIECVRYARTEKIPFLGICFGMQLAVVEFARNVLGLRDANSTELDPQTPHPVVHLAPEQESVDVLGGSMILGNREVEIVPGTLAAALYKASLTVERHRHRFEVNLAYVPKLQEAGLVVSGWRRDVKRVEIIELPAHPYFIATQFHPEFKSRPTRPRPLFLGLLSAAVEQSRR</sequence>
<keyword id="KW-0067">ATP-binding</keyword>
<keyword id="KW-0315">Glutamine amidotransferase</keyword>
<keyword id="KW-0436">Ligase</keyword>
<keyword id="KW-0460">Magnesium</keyword>
<keyword id="KW-0479">Metal-binding</keyword>
<keyword id="KW-0547">Nucleotide-binding</keyword>
<keyword id="KW-0665">Pyrimidine biosynthesis</keyword>
<feature type="chain" id="PRO_1000139541" description="CTP synthase">
    <location>
        <begin position="1"/>
        <end position="531"/>
    </location>
</feature>
<feature type="domain" description="Glutamine amidotransferase type-1" evidence="1">
    <location>
        <begin position="293"/>
        <end position="531"/>
    </location>
</feature>
<feature type="region of interest" description="Amidoligase domain" evidence="1">
    <location>
        <begin position="1"/>
        <end position="264"/>
    </location>
</feature>
<feature type="active site" description="Nucleophile; for glutamine hydrolysis" evidence="1">
    <location>
        <position position="378"/>
    </location>
</feature>
<feature type="active site" evidence="1">
    <location>
        <position position="504"/>
    </location>
</feature>
<feature type="active site" evidence="1">
    <location>
        <position position="506"/>
    </location>
</feature>
<feature type="binding site" evidence="1">
    <location>
        <position position="13"/>
    </location>
    <ligand>
        <name>CTP</name>
        <dbReference type="ChEBI" id="CHEBI:37563"/>
        <note>allosteric inhibitor</note>
    </ligand>
</feature>
<feature type="binding site" evidence="1">
    <location>
        <position position="13"/>
    </location>
    <ligand>
        <name>UTP</name>
        <dbReference type="ChEBI" id="CHEBI:46398"/>
    </ligand>
</feature>
<feature type="binding site" evidence="1">
    <location>
        <begin position="14"/>
        <end position="19"/>
    </location>
    <ligand>
        <name>ATP</name>
        <dbReference type="ChEBI" id="CHEBI:30616"/>
    </ligand>
</feature>
<feature type="binding site" evidence="1">
    <location>
        <position position="54"/>
    </location>
    <ligand>
        <name>L-glutamine</name>
        <dbReference type="ChEBI" id="CHEBI:58359"/>
    </ligand>
</feature>
<feature type="binding site" evidence="1">
    <location>
        <position position="71"/>
    </location>
    <ligand>
        <name>ATP</name>
        <dbReference type="ChEBI" id="CHEBI:30616"/>
    </ligand>
</feature>
<feature type="binding site" evidence="1">
    <location>
        <position position="71"/>
    </location>
    <ligand>
        <name>Mg(2+)</name>
        <dbReference type="ChEBI" id="CHEBI:18420"/>
    </ligand>
</feature>
<feature type="binding site" evidence="1">
    <location>
        <position position="139"/>
    </location>
    <ligand>
        <name>Mg(2+)</name>
        <dbReference type="ChEBI" id="CHEBI:18420"/>
    </ligand>
</feature>
<feature type="binding site" evidence="1">
    <location>
        <begin position="146"/>
        <end position="148"/>
    </location>
    <ligand>
        <name>CTP</name>
        <dbReference type="ChEBI" id="CHEBI:37563"/>
        <note>allosteric inhibitor</note>
    </ligand>
</feature>
<feature type="binding site" evidence="1">
    <location>
        <begin position="185"/>
        <end position="190"/>
    </location>
    <ligand>
        <name>CTP</name>
        <dbReference type="ChEBI" id="CHEBI:37563"/>
        <note>allosteric inhibitor</note>
    </ligand>
</feature>
<feature type="binding site" evidence="1">
    <location>
        <begin position="185"/>
        <end position="190"/>
    </location>
    <ligand>
        <name>UTP</name>
        <dbReference type="ChEBI" id="CHEBI:46398"/>
    </ligand>
</feature>
<feature type="binding site" evidence="1">
    <location>
        <position position="221"/>
    </location>
    <ligand>
        <name>CTP</name>
        <dbReference type="ChEBI" id="CHEBI:37563"/>
        <note>allosteric inhibitor</note>
    </ligand>
</feature>
<feature type="binding site" evidence="1">
    <location>
        <position position="221"/>
    </location>
    <ligand>
        <name>UTP</name>
        <dbReference type="ChEBI" id="CHEBI:46398"/>
    </ligand>
</feature>
<feature type="binding site" evidence="1">
    <location>
        <position position="351"/>
    </location>
    <ligand>
        <name>L-glutamine</name>
        <dbReference type="ChEBI" id="CHEBI:58359"/>
    </ligand>
</feature>
<feature type="binding site" evidence="1">
    <location>
        <begin position="379"/>
        <end position="382"/>
    </location>
    <ligand>
        <name>L-glutamine</name>
        <dbReference type="ChEBI" id="CHEBI:58359"/>
    </ligand>
</feature>
<feature type="binding site" evidence="1">
    <location>
        <position position="402"/>
    </location>
    <ligand>
        <name>L-glutamine</name>
        <dbReference type="ChEBI" id="CHEBI:58359"/>
    </ligand>
</feature>
<feature type="binding site" evidence="1">
    <location>
        <position position="459"/>
    </location>
    <ligand>
        <name>L-glutamine</name>
        <dbReference type="ChEBI" id="CHEBI:58359"/>
    </ligand>
</feature>
<comment type="function">
    <text evidence="1">Catalyzes the ATP-dependent amination of UTP to CTP with either L-glutamine or ammonia as the source of nitrogen. Regulates intracellular CTP levels through interactions with the four ribonucleotide triphosphates.</text>
</comment>
<comment type="catalytic activity">
    <reaction evidence="1">
        <text>UTP + L-glutamine + ATP + H2O = CTP + L-glutamate + ADP + phosphate + 2 H(+)</text>
        <dbReference type="Rhea" id="RHEA:26426"/>
        <dbReference type="ChEBI" id="CHEBI:15377"/>
        <dbReference type="ChEBI" id="CHEBI:15378"/>
        <dbReference type="ChEBI" id="CHEBI:29985"/>
        <dbReference type="ChEBI" id="CHEBI:30616"/>
        <dbReference type="ChEBI" id="CHEBI:37563"/>
        <dbReference type="ChEBI" id="CHEBI:43474"/>
        <dbReference type="ChEBI" id="CHEBI:46398"/>
        <dbReference type="ChEBI" id="CHEBI:58359"/>
        <dbReference type="ChEBI" id="CHEBI:456216"/>
        <dbReference type="EC" id="6.3.4.2"/>
    </reaction>
</comment>
<comment type="catalytic activity">
    <reaction evidence="1">
        <text>L-glutamine + H2O = L-glutamate + NH4(+)</text>
        <dbReference type="Rhea" id="RHEA:15889"/>
        <dbReference type="ChEBI" id="CHEBI:15377"/>
        <dbReference type="ChEBI" id="CHEBI:28938"/>
        <dbReference type="ChEBI" id="CHEBI:29985"/>
        <dbReference type="ChEBI" id="CHEBI:58359"/>
    </reaction>
</comment>
<comment type="catalytic activity">
    <reaction evidence="1">
        <text>UTP + NH4(+) + ATP = CTP + ADP + phosphate + 2 H(+)</text>
        <dbReference type="Rhea" id="RHEA:16597"/>
        <dbReference type="ChEBI" id="CHEBI:15378"/>
        <dbReference type="ChEBI" id="CHEBI:28938"/>
        <dbReference type="ChEBI" id="CHEBI:30616"/>
        <dbReference type="ChEBI" id="CHEBI:37563"/>
        <dbReference type="ChEBI" id="CHEBI:43474"/>
        <dbReference type="ChEBI" id="CHEBI:46398"/>
        <dbReference type="ChEBI" id="CHEBI:456216"/>
    </reaction>
</comment>
<comment type="activity regulation">
    <text evidence="1">Allosterically activated by GTP, when glutamine is the substrate; GTP has no effect on the reaction when ammonia is the substrate. The allosteric effector GTP functions by stabilizing the protein conformation that binds the tetrahedral intermediate(s) formed during glutamine hydrolysis. Inhibited by the product CTP, via allosteric rather than competitive inhibition.</text>
</comment>
<comment type="pathway">
    <text evidence="1">Pyrimidine metabolism; CTP biosynthesis via de novo pathway; CTP from UDP: step 2/2.</text>
</comment>
<comment type="subunit">
    <text evidence="1">Homotetramer.</text>
</comment>
<comment type="miscellaneous">
    <text evidence="1">CTPSs have evolved a hybrid strategy for distinguishing between UTP and CTP. The overlapping regions of the product feedback inhibitory and substrate sites recognize a common feature in both compounds, the triphosphate moiety. To differentiate isosteric substrate and product pyrimidine rings, an additional pocket far from the expected kinase/ligase catalytic site, specifically recognizes the cytosine and ribose portions of the product inhibitor.</text>
</comment>
<comment type="similarity">
    <text evidence="1">Belongs to the CTP synthase family.</text>
</comment>
<gene>
    <name evidence="1" type="primary">pyrG</name>
    <name type="ordered locus">Pcal_1984</name>
</gene>
<evidence type="ECO:0000255" key="1">
    <source>
        <dbReference type="HAMAP-Rule" id="MF_01227"/>
    </source>
</evidence>
<proteinExistence type="inferred from homology"/>
<organism>
    <name type="scientific">Pyrobaculum calidifontis (strain DSM 21063 / JCM 11548 / VA1)</name>
    <dbReference type="NCBI Taxonomy" id="410359"/>
    <lineage>
        <taxon>Archaea</taxon>
        <taxon>Thermoproteota</taxon>
        <taxon>Thermoprotei</taxon>
        <taxon>Thermoproteales</taxon>
        <taxon>Thermoproteaceae</taxon>
        <taxon>Pyrobaculum</taxon>
    </lineage>
</organism>
<name>PYRG_PYRCJ</name>
<reference key="1">
    <citation type="submission" date="2007-02" db="EMBL/GenBank/DDBJ databases">
        <title>Complete sequence of Pyrobaculum calidifontis JCM 11548.</title>
        <authorList>
            <consortium name="US DOE Joint Genome Institute"/>
            <person name="Copeland A."/>
            <person name="Lucas S."/>
            <person name="Lapidus A."/>
            <person name="Barry K."/>
            <person name="Glavina del Rio T."/>
            <person name="Dalin E."/>
            <person name="Tice H."/>
            <person name="Pitluck S."/>
            <person name="Chain P."/>
            <person name="Malfatti S."/>
            <person name="Shin M."/>
            <person name="Vergez L."/>
            <person name="Schmutz J."/>
            <person name="Larimer F."/>
            <person name="Land M."/>
            <person name="Hauser L."/>
            <person name="Kyrpides N."/>
            <person name="Mikhailova N."/>
            <person name="Cozen A.E."/>
            <person name="Fitz-Gibbon S.T."/>
            <person name="House C.H."/>
            <person name="Saltikov C."/>
            <person name="Lowe T.M."/>
            <person name="Richardson P."/>
        </authorList>
    </citation>
    <scope>NUCLEOTIDE SEQUENCE [LARGE SCALE GENOMIC DNA]</scope>
    <source>
        <strain>DSM 21063 / JCM 11548 / VA1</strain>
    </source>
</reference>
<accession>A3MXN2</accession>
<dbReference type="EC" id="6.3.4.2" evidence="1"/>
<dbReference type="EMBL" id="CP000561">
    <property type="protein sequence ID" value="ABO09399.1"/>
    <property type="molecule type" value="Genomic_DNA"/>
</dbReference>
<dbReference type="RefSeq" id="WP_011850657.1">
    <property type="nucleotide sequence ID" value="NC_009073.1"/>
</dbReference>
<dbReference type="SMR" id="A3MXN2"/>
<dbReference type="STRING" id="410359.Pcal_1984"/>
<dbReference type="MEROPS" id="C26.964"/>
<dbReference type="GeneID" id="4909492"/>
<dbReference type="KEGG" id="pcl:Pcal_1984"/>
<dbReference type="eggNOG" id="arCOG00063">
    <property type="taxonomic scope" value="Archaea"/>
</dbReference>
<dbReference type="HOGENOM" id="CLU_011675_5_0_2"/>
<dbReference type="OrthoDB" id="52769at2157"/>
<dbReference type="UniPathway" id="UPA00159">
    <property type="reaction ID" value="UER00277"/>
</dbReference>
<dbReference type="Proteomes" id="UP000001431">
    <property type="component" value="Chromosome"/>
</dbReference>
<dbReference type="GO" id="GO:0005524">
    <property type="term" value="F:ATP binding"/>
    <property type="evidence" value="ECO:0007669"/>
    <property type="project" value="UniProtKB-KW"/>
</dbReference>
<dbReference type="GO" id="GO:0003883">
    <property type="term" value="F:CTP synthase activity"/>
    <property type="evidence" value="ECO:0007669"/>
    <property type="project" value="UniProtKB-UniRule"/>
</dbReference>
<dbReference type="GO" id="GO:0004359">
    <property type="term" value="F:glutaminase activity"/>
    <property type="evidence" value="ECO:0007669"/>
    <property type="project" value="RHEA"/>
</dbReference>
<dbReference type="GO" id="GO:0042802">
    <property type="term" value="F:identical protein binding"/>
    <property type="evidence" value="ECO:0007669"/>
    <property type="project" value="TreeGrafter"/>
</dbReference>
<dbReference type="GO" id="GO:0046872">
    <property type="term" value="F:metal ion binding"/>
    <property type="evidence" value="ECO:0007669"/>
    <property type="project" value="UniProtKB-KW"/>
</dbReference>
<dbReference type="GO" id="GO:0044210">
    <property type="term" value="P:'de novo' CTP biosynthetic process"/>
    <property type="evidence" value="ECO:0007669"/>
    <property type="project" value="UniProtKB-UniRule"/>
</dbReference>
<dbReference type="GO" id="GO:0019856">
    <property type="term" value="P:pyrimidine nucleobase biosynthetic process"/>
    <property type="evidence" value="ECO:0007669"/>
    <property type="project" value="TreeGrafter"/>
</dbReference>
<dbReference type="CDD" id="cd03113">
    <property type="entry name" value="CTPS_N"/>
    <property type="match status" value="1"/>
</dbReference>
<dbReference type="CDD" id="cd01746">
    <property type="entry name" value="GATase1_CTP_Synthase"/>
    <property type="match status" value="1"/>
</dbReference>
<dbReference type="FunFam" id="3.40.50.300:FF:000009">
    <property type="entry name" value="CTP synthase"/>
    <property type="match status" value="1"/>
</dbReference>
<dbReference type="FunFam" id="3.40.50.880:FF:000002">
    <property type="entry name" value="CTP synthase"/>
    <property type="match status" value="1"/>
</dbReference>
<dbReference type="Gene3D" id="3.40.50.880">
    <property type="match status" value="1"/>
</dbReference>
<dbReference type="Gene3D" id="3.40.50.300">
    <property type="entry name" value="P-loop containing nucleotide triphosphate hydrolases"/>
    <property type="match status" value="1"/>
</dbReference>
<dbReference type="HAMAP" id="MF_01227">
    <property type="entry name" value="PyrG"/>
    <property type="match status" value="1"/>
</dbReference>
<dbReference type="InterPro" id="IPR029062">
    <property type="entry name" value="Class_I_gatase-like"/>
</dbReference>
<dbReference type="InterPro" id="IPR004468">
    <property type="entry name" value="CTP_synthase"/>
</dbReference>
<dbReference type="InterPro" id="IPR017456">
    <property type="entry name" value="CTP_synthase_N"/>
</dbReference>
<dbReference type="InterPro" id="IPR017926">
    <property type="entry name" value="GATASE"/>
</dbReference>
<dbReference type="InterPro" id="IPR033828">
    <property type="entry name" value="GATase1_CTP_Synthase"/>
</dbReference>
<dbReference type="InterPro" id="IPR027417">
    <property type="entry name" value="P-loop_NTPase"/>
</dbReference>
<dbReference type="NCBIfam" id="NF003792">
    <property type="entry name" value="PRK05380.1"/>
    <property type="match status" value="1"/>
</dbReference>
<dbReference type="NCBIfam" id="TIGR00337">
    <property type="entry name" value="PyrG"/>
    <property type="match status" value="1"/>
</dbReference>
<dbReference type="PANTHER" id="PTHR11550">
    <property type="entry name" value="CTP SYNTHASE"/>
    <property type="match status" value="1"/>
</dbReference>
<dbReference type="PANTHER" id="PTHR11550:SF0">
    <property type="entry name" value="CTP SYNTHASE-RELATED"/>
    <property type="match status" value="1"/>
</dbReference>
<dbReference type="Pfam" id="PF06418">
    <property type="entry name" value="CTP_synth_N"/>
    <property type="match status" value="1"/>
</dbReference>
<dbReference type="Pfam" id="PF00117">
    <property type="entry name" value="GATase"/>
    <property type="match status" value="1"/>
</dbReference>
<dbReference type="SUPFAM" id="SSF52317">
    <property type="entry name" value="Class I glutamine amidotransferase-like"/>
    <property type="match status" value="1"/>
</dbReference>
<dbReference type="SUPFAM" id="SSF52540">
    <property type="entry name" value="P-loop containing nucleoside triphosphate hydrolases"/>
    <property type="match status" value="1"/>
</dbReference>
<dbReference type="PROSITE" id="PS51273">
    <property type="entry name" value="GATASE_TYPE_1"/>
    <property type="match status" value="1"/>
</dbReference>
<protein>
    <recommendedName>
        <fullName evidence="1">CTP synthase</fullName>
        <ecNumber evidence="1">6.3.4.2</ecNumber>
    </recommendedName>
    <alternativeName>
        <fullName evidence="1">Cytidine 5'-triphosphate synthase</fullName>
    </alternativeName>
    <alternativeName>
        <fullName evidence="1">Cytidine triphosphate synthetase</fullName>
        <shortName evidence="1">CTP synthetase</shortName>
        <shortName evidence="1">CTPS</shortName>
    </alternativeName>
    <alternativeName>
        <fullName evidence="1">UTP--ammonia ligase</fullName>
    </alternativeName>
</protein>